<feature type="chain" id="PRO_0000227103" description="Glycine dehydrogenase (decarboxylating)">
    <location>
        <begin position="1"/>
        <end position="963"/>
    </location>
</feature>
<feature type="modified residue" description="N6-(pyridoxal phosphate)lysine" evidence="1">
    <location>
        <position position="707"/>
    </location>
</feature>
<protein>
    <recommendedName>
        <fullName evidence="1">Glycine dehydrogenase (decarboxylating)</fullName>
        <ecNumber evidence="1">1.4.4.2</ecNumber>
    </recommendedName>
    <alternativeName>
        <fullName evidence="1">Glycine cleavage system P-protein</fullName>
    </alternativeName>
    <alternativeName>
        <fullName evidence="1">Glycine decarboxylase</fullName>
    </alternativeName>
    <alternativeName>
        <fullName evidence="1">Glycine dehydrogenase (aminomethyl-transferring)</fullName>
    </alternativeName>
</protein>
<keyword id="KW-0560">Oxidoreductase</keyword>
<keyword id="KW-0663">Pyridoxal phosphate</keyword>
<accession>Q47D81</accession>
<evidence type="ECO:0000255" key="1">
    <source>
        <dbReference type="HAMAP-Rule" id="MF_00711"/>
    </source>
</evidence>
<organism>
    <name type="scientific">Dechloromonas aromatica (strain RCB)</name>
    <dbReference type="NCBI Taxonomy" id="159087"/>
    <lineage>
        <taxon>Bacteria</taxon>
        <taxon>Pseudomonadati</taxon>
        <taxon>Pseudomonadota</taxon>
        <taxon>Betaproteobacteria</taxon>
        <taxon>Rhodocyclales</taxon>
        <taxon>Azonexaceae</taxon>
        <taxon>Dechloromonas</taxon>
    </lineage>
</organism>
<sequence>MPLNLPLSALEQHDEFIGRHIGPCSTEMATMLTAIGADSLEQLIDQTVPAAIRLPADLPLPAPRREHEALADLKAMASKNVVNKSCIGMGYYDTLTPKVILRNVMENPGWYTAYTPYQAEIAQGRLEALMNFQQMVIDLTGLEIANASLLDEATAAAEAMTMARRVSKSKSNRFLVDANCFPQSIDVVKTRAAYFGFELVIGNIDAHKDGDFFGALLQYPGDNGEVRDLTDVIAGLKAKGTTVAVASDLMALVLLKSPGAMGADIALGSSQRFGIPMGFGGPHAAFFATREAFVRSMPGRIIGISKDARGNTAYRMALQTREQHIRREKANSNICTSQVLLANMAGMYVVYHGAEGLRTIAGRIHRLTAILAEGLKRASVNLLTKQFYDTVHFDLGARAESVYNDALAAGYNLRRVSAGVLGISFDETTTRDDVATLFKLIAQTTLDVATIDAQVAAADSALPDSLIRSDAVLQHPVFNTHHTEHEMLRYLKSLQNKDLALDHSMISLGSCTMKLNATSEMIPVTWPEFGGIHPFAPRDQAVGYLEMITSLTEWLKTVTGFDAICMQPNSGAQGEYAGLVAIDRFHASRGEEHRNVCLIPKSAHGTNPATAQMANMKVVVVDCDENGNVDVADLKAKAEEHKDDLACLMITYPSTHGVFEEAIRDICAIVHANGGQVYMDGANLNAQVGLTSPGFIGADVSHMNLHKTFAIPHGGGGPGMGPIGLKAHLAPFMADHVVQPTGDANRVNAGQGAVSAAPFGSASILTISWMYLAMLGGAGVKKATQVAILNANYVAKQLNAHYPVLYVGKNGRVAHECILDIRPIKAATGIAEIDIAKRLMDYGFHAPTVSFPVAGTIMVEPTESESKAELDRFIGAMIAIREEIRQIENGVWTADNNPLKNAPHSQADVMDAEWKHPYSRQQAVFPLPWVAANKFWPSVNRIDDVYGDRNLNCACPPMEAYAD</sequence>
<proteinExistence type="inferred from homology"/>
<gene>
    <name evidence="1" type="primary">gcvP</name>
    <name type="ordered locus">Daro_2465</name>
</gene>
<dbReference type="EC" id="1.4.4.2" evidence="1"/>
<dbReference type="EMBL" id="CP000089">
    <property type="protein sequence ID" value="AAZ47200.1"/>
    <property type="molecule type" value="Genomic_DNA"/>
</dbReference>
<dbReference type="SMR" id="Q47D81"/>
<dbReference type="STRING" id="159087.Daro_2465"/>
<dbReference type="KEGG" id="dar:Daro_2465"/>
<dbReference type="eggNOG" id="COG0403">
    <property type="taxonomic scope" value="Bacteria"/>
</dbReference>
<dbReference type="eggNOG" id="COG1003">
    <property type="taxonomic scope" value="Bacteria"/>
</dbReference>
<dbReference type="HOGENOM" id="CLU_004620_3_2_4"/>
<dbReference type="OrthoDB" id="9801272at2"/>
<dbReference type="GO" id="GO:0005829">
    <property type="term" value="C:cytosol"/>
    <property type="evidence" value="ECO:0007669"/>
    <property type="project" value="TreeGrafter"/>
</dbReference>
<dbReference type="GO" id="GO:0005960">
    <property type="term" value="C:glycine cleavage complex"/>
    <property type="evidence" value="ECO:0007669"/>
    <property type="project" value="TreeGrafter"/>
</dbReference>
<dbReference type="GO" id="GO:0016594">
    <property type="term" value="F:glycine binding"/>
    <property type="evidence" value="ECO:0007669"/>
    <property type="project" value="TreeGrafter"/>
</dbReference>
<dbReference type="GO" id="GO:0004375">
    <property type="term" value="F:glycine dehydrogenase (decarboxylating) activity"/>
    <property type="evidence" value="ECO:0007669"/>
    <property type="project" value="UniProtKB-EC"/>
</dbReference>
<dbReference type="GO" id="GO:0030170">
    <property type="term" value="F:pyridoxal phosphate binding"/>
    <property type="evidence" value="ECO:0007669"/>
    <property type="project" value="TreeGrafter"/>
</dbReference>
<dbReference type="GO" id="GO:0019464">
    <property type="term" value="P:glycine decarboxylation via glycine cleavage system"/>
    <property type="evidence" value="ECO:0007669"/>
    <property type="project" value="UniProtKB-UniRule"/>
</dbReference>
<dbReference type="CDD" id="cd00613">
    <property type="entry name" value="GDC-P"/>
    <property type="match status" value="2"/>
</dbReference>
<dbReference type="FunFam" id="3.40.640.10:FF:000005">
    <property type="entry name" value="Glycine dehydrogenase (decarboxylating), mitochondrial"/>
    <property type="match status" value="1"/>
</dbReference>
<dbReference type="FunFam" id="3.90.1150.10:FF:000007">
    <property type="entry name" value="Glycine dehydrogenase (decarboxylating), mitochondrial"/>
    <property type="match status" value="1"/>
</dbReference>
<dbReference type="FunFam" id="3.40.640.10:FF:000007">
    <property type="entry name" value="glycine dehydrogenase (Decarboxylating), mitochondrial"/>
    <property type="match status" value="1"/>
</dbReference>
<dbReference type="Gene3D" id="3.90.1150.10">
    <property type="entry name" value="Aspartate Aminotransferase, domain 1"/>
    <property type="match status" value="2"/>
</dbReference>
<dbReference type="Gene3D" id="3.40.640.10">
    <property type="entry name" value="Type I PLP-dependent aspartate aminotransferase-like (Major domain)"/>
    <property type="match status" value="2"/>
</dbReference>
<dbReference type="HAMAP" id="MF_00711">
    <property type="entry name" value="GcvP"/>
    <property type="match status" value="1"/>
</dbReference>
<dbReference type="InterPro" id="IPR018247">
    <property type="entry name" value="EF_Hand_1_Ca_BS"/>
</dbReference>
<dbReference type="InterPro" id="IPR003437">
    <property type="entry name" value="GcvP"/>
</dbReference>
<dbReference type="InterPro" id="IPR049316">
    <property type="entry name" value="GDC-P_C"/>
</dbReference>
<dbReference type="InterPro" id="IPR049315">
    <property type="entry name" value="GDC-P_N"/>
</dbReference>
<dbReference type="InterPro" id="IPR020581">
    <property type="entry name" value="GDC_P"/>
</dbReference>
<dbReference type="InterPro" id="IPR015424">
    <property type="entry name" value="PyrdxlP-dep_Trfase"/>
</dbReference>
<dbReference type="InterPro" id="IPR015421">
    <property type="entry name" value="PyrdxlP-dep_Trfase_major"/>
</dbReference>
<dbReference type="InterPro" id="IPR015422">
    <property type="entry name" value="PyrdxlP-dep_Trfase_small"/>
</dbReference>
<dbReference type="NCBIfam" id="TIGR00461">
    <property type="entry name" value="gcvP"/>
    <property type="match status" value="1"/>
</dbReference>
<dbReference type="NCBIfam" id="NF003346">
    <property type="entry name" value="PRK04366.1"/>
    <property type="match status" value="1"/>
</dbReference>
<dbReference type="PANTHER" id="PTHR11773:SF13">
    <property type="entry name" value="GLYCINE DEHYDROGENASE (DECARBOXYLATING)"/>
    <property type="match status" value="1"/>
</dbReference>
<dbReference type="PANTHER" id="PTHR11773">
    <property type="entry name" value="GLYCINE DEHYDROGENASE, DECARBOXYLATING"/>
    <property type="match status" value="1"/>
</dbReference>
<dbReference type="Pfam" id="PF21478">
    <property type="entry name" value="GcvP2_C"/>
    <property type="match status" value="1"/>
</dbReference>
<dbReference type="Pfam" id="PF02347">
    <property type="entry name" value="GDC-P"/>
    <property type="match status" value="2"/>
</dbReference>
<dbReference type="SUPFAM" id="SSF53383">
    <property type="entry name" value="PLP-dependent transferases"/>
    <property type="match status" value="2"/>
</dbReference>
<reference key="1">
    <citation type="journal article" date="2009" name="BMC Genomics">
        <title>Metabolic analysis of the soil microbe Dechloromonas aromatica str. RCB: indications of a surprisingly complex life-style and cryptic anaerobic pathways for aromatic degradation.</title>
        <authorList>
            <person name="Salinero K.K."/>
            <person name="Keller K."/>
            <person name="Feil W.S."/>
            <person name="Feil H."/>
            <person name="Trong S."/>
            <person name="Di Bartolo G."/>
            <person name="Lapidus A."/>
        </authorList>
    </citation>
    <scope>NUCLEOTIDE SEQUENCE [LARGE SCALE GENOMIC DNA]</scope>
    <source>
        <strain>RCB</strain>
    </source>
</reference>
<name>GCSP_DECAR</name>
<comment type="function">
    <text evidence="1">The glycine cleavage system catalyzes the degradation of glycine. The P protein binds the alpha-amino group of glycine through its pyridoxal phosphate cofactor; CO(2) is released and the remaining methylamine moiety is then transferred to the lipoamide cofactor of the H protein.</text>
</comment>
<comment type="catalytic activity">
    <reaction evidence="1">
        <text>N(6)-[(R)-lipoyl]-L-lysyl-[glycine-cleavage complex H protein] + glycine + H(+) = N(6)-[(R)-S(8)-aminomethyldihydrolipoyl]-L-lysyl-[glycine-cleavage complex H protein] + CO2</text>
        <dbReference type="Rhea" id="RHEA:24304"/>
        <dbReference type="Rhea" id="RHEA-COMP:10494"/>
        <dbReference type="Rhea" id="RHEA-COMP:10495"/>
        <dbReference type="ChEBI" id="CHEBI:15378"/>
        <dbReference type="ChEBI" id="CHEBI:16526"/>
        <dbReference type="ChEBI" id="CHEBI:57305"/>
        <dbReference type="ChEBI" id="CHEBI:83099"/>
        <dbReference type="ChEBI" id="CHEBI:83143"/>
        <dbReference type="EC" id="1.4.4.2"/>
    </reaction>
</comment>
<comment type="cofactor">
    <cofactor evidence="1">
        <name>pyridoxal 5'-phosphate</name>
        <dbReference type="ChEBI" id="CHEBI:597326"/>
    </cofactor>
</comment>
<comment type="subunit">
    <text evidence="1">The glycine cleavage system is composed of four proteins: P, T, L and H.</text>
</comment>
<comment type="similarity">
    <text evidence="1">Belongs to the GcvP family.</text>
</comment>